<feature type="chain" id="PRO_0000200295" description="Cytochrome b559 subunit alpha">
    <location>
        <begin position="1"/>
        <end position="83"/>
    </location>
</feature>
<feature type="transmembrane region" description="Helical" evidence="1">
    <location>
        <begin position="21"/>
        <end position="35"/>
    </location>
</feature>
<feature type="binding site" description="axial binding residue" evidence="1">
    <location>
        <position position="23"/>
    </location>
    <ligand>
        <name>heme</name>
        <dbReference type="ChEBI" id="CHEBI:30413"/>
        <note>ligand shared with beta subunit</note>
    </ligand>
    <ligandPart>
        <name>Fe</name>
        <dbReference type="ChEBI" id="CHEBI:18248"/>
    </ligandPart>
</feature>
<sequence length="83" mass="9382">MSGNTGERPFADIITSIRYWVIHSITIPSLFIAGWLFVSTGLAYDVFGSPRPNEYFSESRQEVPLITGRFDSLEQVDAFTKSF</sequence>
<accession>Q85FK5</accession>
<protein>
    <recommendedName>
        <fullName evidence="1">Cytochrome b559 subunit alpha</fullName>
    </recommendedName>
    <alternativeName>
        <fullName evidence="1">PSII reaction center subunit V</fullName>
    </alternativeName>
</protein>
<evidence type="ECO:0000255" key="1">
    <source>
        <dbReference type="HAMAP-Rule" id="MF_00642"/>
    </source>
</evidence>
<evidence type="ECO:0000269" key="2">
    <source>
    </source>
</evidence>
<gene>
    <name evidence="1" type="primary">psbE</name>
</gene>
<comment type="function">
    <text evidence="1">This b-type cytochrome is tightly associated with the reaction center of photosystem II (PSII). PSII is a light-driven water:plastoquinone oxidoreductase that uses light energy to abstract electrons from H(2)O, generating O(2) and a proton gradient subsequently used for ATP formation. It consists of a core antenna complex that captures photons, and an electron transfer chain that converts photonic excitation into a charge separation.</text>
</comment>
<comment type="cofactor">
    <cofactor evidence="1">
        <name>heme b</name>
        <dbReference type="ChEBI" id="CHEBI:60344"/>
    </cofactor>
    <text evidence="1">With its partner (PsbF) binds heme. PSII binds additional chlorophylls, carotenoids and specific lipids.</text>
</comment>
<comment type="subunit">
    <text evidence="1">Heterodimer of an alpha subunit and a beta subunit. PSII is composed of 1 copy each of membrane proteins PsbA, PsbB, PsbC, PsbD, PsbE, PsbF, PsbH, PsbI, PsbJ, PsbK, PsbL, PsbM, PsbT, PsbX, PsbY, PsbZ, Psb30/Ycf12, at least 3 peripheral proteins of the oxygen-evolving complex and a large number of cofactors. It forms dimeric complexes.</text>
</comment>
<comment type="subcellular location">
    <subcellularLocation>
        <location evidence="1">Plastid</location>
        <location evidence="1">Chloroplast thylakoid membrane</location>
        <topology evidence="1">Single-pass membrane protein</topology>
    </subcellularLocation>
</comment>
<comment type="RNA editing">
    <location>
        <position position="10" evidence="2"/>
    </location>
    <location>
        <position position="30" evidence="2"/>
    </location>
    <location>
        <position position="37" evidence="2"/>
    </location>
    <location>
        <position position="47" evidence="2"/>
    </location>
</comment>
<comment type="similarity">
    <text evidence="1">Belongs to the PsbE/PsbF family.</text>
</comment>
<reference key="1">
    <citation type="journal article" date="2003" name="DNA Res.">
        <title>Complete nucleotide sequence of the chloroplast genome from a leptosporangiate fern, Adiantum capillus-veneris L.</title>
        <authorList>
            <person name="Wolf P.G."/>
            <person name="Rowe C.A."/>
            <person name="Sinclair R.B."/>
            <person name="Hasebe M."/>
        </authorList>
    </citation>
    <scope>NUCLEOTIDE SEQUENCE [LARGE SCALE GENOMIC DNA]</scope>
</reference>
<reference key="2">
    <citation type="journal article" date="2004" name="Gene">
        <title>High levels of RNA editing in a vascular plant chloroplast genome: analysis of transcripts from the fern Adiantum capillus-veneris.</title>
        <authorList>
            <person name="Wolf P.G."/>
            <person name="Rowe C.A."/>
            <person name="Hasebe M."/>
        </authorList>
    </citation>
    <scope>NUCLEOTIDE SEQUENCE [GENOMIC DNA]</scope>
    <scope>RNA EDITING</scope>
</reference>
<geneLocation type="chloroplast"/>
<dbReference type="EMBL" id="AY178864">
    <property type="protein sequence ID" value="AAP29408.2"/>
    <property type="molecule type" value="Genomic_DNA"/>
</dbReference>
<dbReference type="RefSeq" id="NP_848077.2">
    <property type="nucleotide sequence ID" value="NC_004766.1"/>
</dbReference>
<dbReference type="SMR" id="Q85FK5"/>
<dbReference type="GeneID" id="807406"/>
<dbReference type="GO" id="GO:0009535">
    <property type="term" value="C:chloroplast thylakoid membrane"/>
    <property type="evidence" value="ECO:0007669"/>
    <property type="project" value="UniProtKB-SubCell"/>
</dbReference>
<dbReference type="GO" id="GO:0009539">
    <property type="term" value="C:photosystem II reaction center"/>
    <property type="evidence" value="ECO:0007669"/>
    <property type="project" value="InterPro"/>
</dbReference>
<dbReference type="GO" id="GO:0009055">
    <property type="term" value="F:electron transfer activity"/>
    <property type="evidence" value="ECO:0007669"/>
    <property type="project" value="UniProtKB-UniRule"/>
</dbReference>
<dbReference type="GO" id="GO:0020037">
    <property type="term" value="F:heme binding"/>
    <property type="evidence" value="ECO:0007669"/>
    <property type="project" value="InterPro"/>
</dbReference>
<dbReference type="GO" id="GO:0005506">
    <property type="term" value="F:iron ion binding"/>
    <property type="evidence" value="ECO:0007669"/>
    <property type="project" value="UniProtKB-UniRule"/>
</dbReference>
<dbReference type="GO" id="GO:0009767">
    <property type="term" value="P:photosynthetic electron transport chain"/>
    <property type="evidence" value="ECO:0007669"/>
    <property type="project" value="InterPro"/>
</dbReference>
<dbReference type="Gene3D" id="1.20.5.860">
    <property type="entry name" value="Photosystem II cytochrome b559, alpha subunit"/>
    <property type="match status" value="1"/>
</dbReference>
<dbReference type="HAMAP" id="MF_00642">
    <property type="entry name" value="PSII_PsbE"/>
    <property type="match status" value="1"/>
</dbReference>
<dbReference type="InterPro" id="IPR006217">
    <property type="entry name" value="PSII_cyt_b559_asu"/>
</dbReference>
<dbReference type="InterPro" id="IPR037025">
    <property type="entry name" value="PSII_cyt_b559_asu_sf"/>
</dbReference>
<dbReference type="InterPro" id="IPR006216">
    <property type="entry name" value="PSII_cyt_b559_CS"/>
</dbReference>
<dbReference type="InterPro" id="IPR013081">
    <property type="entry name" value="PSII_cyt_b559_N"/>
</dbReference>
<dbReference type="InterPro" id="IPR013082">
    <property type="entry name" value="PSII_cytb559_asu_lum"/>
</dbReference>
<dbReference type="NCBIfam" id="TIGR01332">
    <property type="entry name" value="cyt_b559_alpha"/>
    <property type="match status" value="1"/>
</dbReference>
<dbReference type="PANTHER" id="PTHR33391">
    <property type="entry name" value="CYTOCHROME B559 SUBUNIT BETA-RELATED"/>
    <property type="match status" value="1"/>
</dbReference>
<dbReference type="PANTHER" id="PTHR33391:SF9">
    <property type="entry name" value="CYTOCHROME B559 SUBUNIT BETA-RELATED"/>
    <property type="match status" value="1"/>
</dbReference>
<dbReference type="Pfam" id="PF00283">
    <property type="entry name" value="Cytochrom_B559"/>
    <property type="match status" value="1"/>
</dbReference>
<dbReference type="Pfam" id="PF00284">
    <property type="entry name" value="Cytochrom_B559a"/>
    <property type="match status" value="1"/>
</dbReference>
<dbReference type="PIRSF" id="PIRSF000036">
    <property type="entry name" value="PsbE"/>
    <property type="match status" value="1"/>
</dbReference>
<dbReference type="SUPFAM" id="SSF161045">
    <property type="entry name" value="Cytochrome b559 subunits"/>
    <property type="match status" value="1"/>
</dbReference>
<dbReference type="PROSITE" id="PS00537">
    <property type="entry name" value="CYTOCHROME_B559"/>
    <property type="match status" value="1"/>
</dbReference>
<proteinExistence type="evidence at transcript level"/>
<organism>
    <name type="scientific">Adiantum capillus-veneris</name>
    <name type="common">Maidenhair fern</name>
    <dbReference type="NCBI Taxonomy" id="13818"/>
    <lineage>
        <taxon>Eukaryota</taxon>
        <taxon>Viridiplantae</taxon>
        <taxon>Streptophyta</taxon>
        <taxon>Embryophyta</taxon>
        <taxon>Tracheophyta</taxon>
        <taxon>Polypodiopsida</taxon>
        <taxon>Polypodiidae</taxon>
        <taxon>Polypodiales</taxon>
        <taxon>Pteridineae</taxon>
        <taxon>Pteridaceae</taxon>
        <taxon>Vittarioideae</taxon>
        <taxon>Adiantum</taxon>
    </lineage>
</organism>
<name>PSBE_ADICA</name>
<keyword id="KW-0150">Chloroplast</keyword>
<keyword id="KW-0249">Electron transport</keyword>
<keyword id="KW-0349">Heme</keyword>
<keyword id="KW-0408">Iron</keyword>
<keyword id="KW-0472">Membrane</keyword>
<keyword id="KW-0479">Metal-binding</keyword>
<keyword id="KW-0602">Photosynthesis</keyword>
<keyword id="KW-0604">Photosystem II</keyword>
<keyword id="KW-0934">Plastid</keyword>
<keyword id="KW-0691">RNA editing</keyword>
<keyword id="KW-0793">Thylakoid</keyword>
<keyword id="KW-0812">Transmembrane</keyword>
<keyword id="KW-1133">Transmembrane helix</keyword>
<keyword id="KW-0813">Transport</keyword>